<proteinExistence type="evidence at protein level"/>
<reference key="1">
    <citation type="journal article" date="2006" name="FEBS Lett.">
        <title>The evolution and diversification of Dicers in plants.</title>
        <authorList>
            <person name="Margis R."/>
            <person name="Fusaro A.F."/>
            <person name="Smith N.A."/>
            <person name="Curtin S.J."/>
            <person name="Watson J.M."/>
            <person name="Finnegan E.J."/>
            <person name="Waterhouse P.M."/>
        </authorList>
    </citation>
    <scope>NUCLEOTIDE SEQUENCE [MRNA] (ISOFORMS 1 AND 2)</scope>
</reference>
<reference key="2">
    <citation type="journal article" date="2000" name="Nature">
        <title>Sequence and analysis of chromosome 3 of the plant Arabidopsis thaliana.</title>
        <authorList>
            <person name="Salanoubat M."/>
            <person name="Lemcke K."/>
            <person name="Rieger M."/>
            <person name="Ansorge W."/>
            <person name="Unseld M."/>
            <person name="Fartmann B."/>
            <person name="Valle G."/>
            <person name="Bloecker H."/>
            <person name="Perez-Alonso M."/>
            <person name="Obermaier B."/>
            <person name="Delseny M."/>
            <person name="Boutry M."/>
            <person name="Grivell L.A."/>
            <person name="Mache R."/>
            <person name="Puigdomenech P."/>
            <person name="De Simone V."/>
            <person name="Choisne N."/>
            <person name="Artiguenave F."/>
            <person name="Robert C."/>
            <person name="Brottier P."/>
            <person name="Wincker P."/>
            <person name="Cattolico L."/>
            <person name="Weissenbach J."/>
            <person name="Saurin W."/>
            <person name="Quetier F."/>
            <person name="Schaefer M."/>
            <person name="Mueller-Auer S."/>
            <person name="Gabel C."/>
            <person name="Fuchs M."/>
            <person name="Benes V."/>
            <person name="Wurmbach E."/>
            <person name="Drzonek H."/>
            <person name="Erfle H."/>
            <person name="Jordan N."/>
            <person name="Bangert S."/>
            <person name="Wiedelmann R."/>
            <person name="Kranz H."/>
            <person name="Voss H."/>
            <person name="Holland R."/>
            <person name="Brandt P."/>
            <person name="Nyakatura G."/>
            <person name="Vezzi A."/>
            <person name="D'Angelo M."/>
            <person name="Pallavicini A."/>
            <person name="Toppo S."/>
            <person name="Simionati B."/>
            <person name="Conrad A."/>
            <person name="Hornischer K."/>
            <person name="Kauer G."/>
            <person name="Loehnert T.-H."/>
            <person name="Nordsiek G."/>
            <person name="Reichelt J."/>
            <person name="Scharfe M."/>
            <person name="Schoen O."/>
            <person name="Bargues M."/>
            <person name="Terol J."/>
            <person name="Climent J."/>
            <person name="Navarro P."/>
            <person name="Collado C."/>
            <person name="Perez-Perez A."/>
            <person name="Ottenwaelder B."/>
            <person name="Duchemin D."/>
            <person name="Cooke R."/>
            <person name="Laudie M."/>
            <person name="Berger-Llauro C."/>
            <person name="Purnelle B."/>
            <person name="Masuy D."/>
            <person name="de Haan M."/>
            <person name="Maarse A.C."/>
            <person name="Alcaraz J.-P."/>
            <person name="Cottet A."/>
            <person name="Casacuberta E."/>
            <person name="Monfort A."/>
            <person name="Argiriou A."/>
            <person name="Flores M."/>
            <person name="Liguori R."/>
            <person name="Vitale D."/>
            <person name="Mannhaupt G."/>
            <person name="Haase D."/>
            <person name="Schoof H."/>
            <person name="Rudd S."/>
            <person name="Zaccaria P."/>
            <person name="Mewes H.-W."/>
            <person name="Mayer K.F.X."/>
            <person name="Kaul S."/>
            <person name="Town C.D."/>
            <person name="Koo H.L."/>
            <person name="Tallon L.J."/>
            <person name="Jenkins J."/>
            <person name="Rooney T."/>
            <person name="Rizzo M."/>
            <person name="Walts A."/>
            <person name="Utterback T."/>
            <person name="Fujii C.Y."/>
            <person name="Shea T.P."/>
            <person name="Creasy T.H."/>
            <person name="Haas B."/>
            <person name="Maiti R."/>
            <person name="Wu D."/>
            <person name="Peterson J."/>
            <person name="Van Aken S."/>
            <person name="Pai G."/>
            <person name="Militscher J."/>
            <person name="Sellers P."/>
            <person name="Gill J.E."/>
            <person name="Feldblyum T.V."/>
            <person name="Preuss D."/>
            <person name="Lin X."/>
            <person name="Nierman W.C."/>
            <person name="Salzberg S.L."/>
            <person name="White O."/>
            <person name="Venter J.C."/>
            <person name="Fraser C.M."/>
            <person name="Kaneko T."/>
            <person name="Nakamura Y."/>
            <person name="Sato S."/>
            <person name="Kato T."/>
            <person name="Asamizu E."/>
            <person name="Sasamoto S."/>
            <person name="Kimura T."/>
            <person name="Idesawa K."/>
            <person name="Kawashima K."/>
            <person name="Kishida Y."/>
            <person name="Kiyokawa C."/>
            <person name="Kohara M."/>
            <person name="Matsumoto M."/>
            <person name="Matsuno A."/>
            <person name="Muraki A."/>
            <person name="Nakayama S."/>
            <person name="Nakazaki N."/>
            <person name="Shinpo S."/>
            <person name="Takeuchi C."/>
            <person name="Wada T."/>
            <person name="Watanabe A."/>
            <person name="Yamada M."/>
            <person name="Yasuda M."/>
            <person name="Tabata S."/>
        </authorList>
    </citation>
    <scope>NUCLEOTIDE SEQUENCE [LARGE SCALE GENOMIC DNA]</scope>
    <source>
        <strain>cv. Columbia</strain>
    </source>
</reference>
<reference key="3">
    <citation type="journal article" date="2017" name="Plant J.">
        <title>Araport11: a complete reannotation of the Arabidopsis thaliana reference genome.</title>
        <authorList>
            <person name="Cheng C.Y."/>
            <person name="Krishnakumar V."/>
            <person name="Chan A.P."/>
            <person name="Thibaud-Nissen F."/>
            <person name="Schobel S."/>
            <person name="Town C.D."/>
        </authorList>
    </citation>
    <scope>GENOME REANNOTATION</scope>
    <source>
        <strain>cv. Columbia</strain>
    </source>
</reference>
<reference key="4">
    <citation type="journal article" date="2004" name="PLoS Biol.">
        <title>Genetic and functional diversification of small RNA pathways in plants.</title>
        <authorList>
            <person name="Xie Z."/>
            <person name="Johansen L.K."/>
            <person name="Gustafson A.M."/>
            <person name="Kasschau K.D."/>
            <person name="Lellis A.D."/>
            <person name="Zilberman D."/>
            <person name="Jacobsen S.E."/>
            <person name="Carrington J.C."/>
        </authorList>
    </citation>
    <scope>SUBCELLULAR LOCATION</scope>
</reference>
<reference key="5">
    <citation type="journal article" date="2005" name="Curr. Biol.">
        <title>Partially redundant functions of Arabidopsis DICER-like enzymes and a role for DCL4 in producing trans-acting siRNAs.</title>
        <authorList>
            <person name="Gasciolli V."/>
            <person name="Mallory A.C."/>
            <person name="Bartel D.P."/>
            <person name="Vaucheret H."/>
        </authorList>
    </citation>
    <scope>FUNCTION</scope>
</reference>
<reference key="6">
    <citation type="journal article" date="2006" name="EMBO J.">
        <title>An antagonistic function for Arabidopsis DCL2 in development and a new function for DCL4 in generating viral siRNAs.</title>
        <authorList>
            <person name="Bouche N."/>
            <person name="Lauressergues D."/>
            <person name="Gasciolli V."/>
            <person name="Vaucheret H."/>
        </authorList>
    </citation>
    <scope>FUNCTION</scope>
</reference>
<reference key="7">
    <citation type="journal article" date="2007" name="Plant Cell">
        <title>Suppression of antiviral silencing by cucumber mosaic virus 2b protein in Arabidopsis is associated with drastically reduced accumulation of three classes of viral small interfering RNAs.</title>
        <authorList>
            <person name="Diaz-Pendon J.A."/>
            <person name="Li F."/>
            <person name="Li W.X."/>
            <person name="Ding S.W."/>
        </authorList>
    </citation>
    <scope>FUNCTION</scope>
</reference>
<reference key="8">
    <citation type="journal article" date="2007" name="RNA">
        <title>Transitivity in Arabidopsis can be primed, requires the redundant action of the antiviral Dicer-like 4 and Dicer-like 2, and is compromised by viral-encoded suppressor proteins.</title>
        <authorList>
            <person name="Moissiard G."/>
            <person name="Parizotto E.A."/>
            <person name="Himber C."/>
            <person name="Voinnet O."/>
        </authorList>
    </citation>
    <scope>FUNCTION</scope>
</reference>
<reference key="9">
    <citation type="journal article" date="2008" name="J. Virol.">
        <title>Structural and genetic requirements for the biogenesis of tobacco rattle virus-derived small interfering RNAs.</title>
        <authorList>
            <person name="Donaire L."/>
            <person name="Barajas D."/>
            <person name="Martinez-Garcia B."/>
            <person name="Martinez-Priego L."/>
            <person name="Pagan I."/>
            <person name="Llave C."/>
        </authorList>
    </citation>
    <scope>FUNCTION</scope>
</reference>
<reference key="10">
    <citation type="journal article" date="2008" name="PLoS ONE">
        <title>DICER-LIKE2 plays a primary role in transitive silencing of transgenes in Arabidopsis.</title>
        <authorList>
            <person name="Mlotshwa S."/>
            <person name="Pruss G.J."/>
            <person name="Peragine A."/>
            <person name="Endres M.W."/>
            <person name="Li J."/>
            <person name="Chen X."/>
            <person name="Poethig R.S."/>
            <person name="Bowman L.H."/>
            <person name="Vance V."/>
        </authorList>
    </citation>
    <scope>FUNCTION</scope>
</reference>
<reference key="11">
    <citation type="journal article" date="2013" name="PLoS ONE">
        <title>Genome-wide comparative in silico analysis of the RNA helicase gene family in Zea mays and Glycine max: a comparison with Arabidopsis and Oryza sativa.</title>
        <authorList>
            <person name="Xu R."/>
            <person name="Zhang S."/>
            <person name="Huang J."/>
            <person name="Zheng C."/>
        </authorList>
    </citation>
    <scope>GENE FAMILY</scope>
</reference>
<dbReference type="EC" id="3.1.26.-"/>
<dbReference type="EMBL" id="DQ479970">
    <property type="protein sequence ID" value="ABF19797.1"/>
    <property type="status" value="ALT_INIT"/>
    <property type="molecule type" value="mRNA"/>
</dbReference>
<dbReference type="EMBL" id="DQ479971">
    <property type="protein sequence ID" value="ABF19798.1"/>
    <property type="molecule type" value="mRNA"/>
</dbReference>
<dbReference type="EMBL" id="AC012328">
    <property type="protein sequence ID" value="AAF26098.1"/>
    <property type="status" value="ALT_SEQ"/>
    <property type="molecule type" value="Genomic_DNA"/>
</dbReference>
<dbReference type="EMBL" id="CP002686">
    <property type="protein sequence ID" value="AEE73924.1"/>
    <property type="molecule type" value="Genomic_DNA"/>
</dbReference>
<dbReference type="EMBL" id="CP002686">
    <property type="protein sequence ID" value="AEE73925.1"/>
    <property type="molecule type" value="Genomic_DNA"/>
</dbReference>
<dbReference type="EMBL" id="CP002686">
    <property type="protein sequence ID" value="AEE73926.1"/>
    <property type="molecule type" value="Genomic_DNA"/>
</dbReference>
<dbReference type="RefSeq" id="NP_001078101.1">
    <molecule id="Q3EBC8-2"/>
    <property type="nucleotide sequence ID" value="NM_001084632.1"/>
</dbReference>
<dbReference type="RefSeq" id="NP_001189798.1">
    <molecule id="Q3EBC8-1"/>
    <property type="nucleotide sequence ID" value="NM_001202869.2"/>
</dbReference>
<dbReference type="RefSeq" id="NP_566199.4">
    <molecule id="Q3EBC8-1"/>
    <property type="nucleotide sequence ID" value="NM_111200.5"/>
</dbReference>
<dbReference type="SMR" id="Q3EBC8"/>
<dbReference type="FunCoup" id="Q3EBC8">
    <property type="interactions" value="3060"/>
</dbReference>
<dbReference type="IntAct" id="Q3EBC8">
    <property type="interactions" value="4"/>
</dbReference>
<dbReference type="STRING" id="3702.Q3EBC8"/>
<dbReference type="GlyGen" id="Q3EBC8">
    <property type="glycosylation" value="1 site"/>
</dbReference>
<dbReference type="iPTMnet" id="Q3EBC8"/>
<dbReference type="PaxDb" id="3702-AT3G03300.1"/>
<dbReference type="ProteomicsDB" id="224607">
    <molecule id="Q3EBC8-1"/>
</dbReference>
<dbReference type="EnsemblPlants" id="AT3G03300.1">
    <molecule id="Q3EBC8-1"/>
    <property type="protein sequence ID" value="AT3G03300.1"/>
    <property type="gene ID" value="AT3G03300"/>
</dbReference>
<dbReference type="EnsemblPlants" id="AT3G03300.2">
    <molecule id="Q3EBC8-2"/>
    <property type="protein sequence ID" value="AT3G03300.2"/>
    <property type="gene ID" value="AT3G03300"/>
</dbReference>
<dbReference type="EnsemblPlants" id="AT3G03300.3">
    <molecule id="Q3EBC8-1"/>
    <property type="protein sequence ID" value="AT3G03300.3"/>
    <property type="gene ID" value="AT3G03300"/>
</dbReference>
<dbReference type="Gramene" id="AT3G03300.1">
    <molecule id="Q3EBC8-1"/>
    <property type="protein sequence ID" value="AT3G03300.1"/>
    <property type="gene ID" value="AT3G03300"/>
</dbReference>
<dbReference type="Gramene" id="AT3G03300.2">
    <molecule id="Q3EBC8-2"/>
    <property type="protein sequence ID" value="AT3G03300.2"/>
    <property type="gene ID" value="AT3G03300"/>
</dbReference>
<dbReference type="Gramene" id="AT3G03300.3">
    <molecule id="Q3EBC8-1"/>
    <property type="protein sequence ID" value="AT3G03300.3"/>
    <property type="gene ID" value="AT3G03300"/>
</dbReference>
<dbReference type="KEGG" id="ath:AT3G03300"/>
<dbReference type="Araport" id="AT3G03300"/>
<dbReference type="TAIR" id="AT3G03300">
    <property type="gene designation" value="DCL2"/>
</dbReference>
<dbReference type="eggNOG" id="KOG0701">
    <property type="taxonomic scope" value="Eukaryota"/>
</dbReference>
<dbReference type="HOGENOM" id="CLU_000907_4_4_1"/>
<dbReference type="InParanoid" id="Q3EBC8"/>
<dbReference type="OMA" id="HFCAVIP"/>
<dbReference type="PhylomeDB" id="Q3EBC8"/>
<dbReference type="PRO" id="PR:Q3EBC8"/>
<dbReference type="Proteomes" id="UP000006548">
    <property type="component" value="Chromosome 3"/>
</dbReference>
<dbReference type="ExpressionAtlas" id="Q3EBC8">
    <property type="expression patterns" value="baseline and differential"/>
</dbReference>
<dbReference type="GO" id="GO:0036464">
    <property type="term" value="C:cytoplasmic ribonucleoprotein granule"/>
    <property type="evidence" value="ECO:0000314"/>
    <property type="project" value="FlyBase"/>
</dbReference>
<dbReference type="GO" id="GO:0005634">
    <property type="term" value="C:nucleus"/>
    <property type="evidence" value="ECO:0007669"/>
    <property type="project" value="UniProtKB-SubCell"/>
</dbReference>
<dbReference type="GO" id="GO:0005524">
    <property type="term" value="F:ATP binding"/>
    <property type="evidence" value="ECO:0007669"/>
    <property type="project" value="UniProtKB-KW"/>
</dbReference>
<dbReference type="GO" id="GO:0004386">
    <property type="term" value="F:helicase activity"/>
    <property type="evidence" value="ECO:0007669"/>
    <property type="project" value="UniProtKB-KW"/>
</dbReference>
<dbReference type="GO" id="GO:0046872">
    <property type="term" value="F:metal ion binding"/>
    <property type="evidence" value="ECO:0007669"/>
    <property type="project" value="UniProtKB-KW"/>
</dbReference>
<dbReference type="GO" id="GO:0004525">
    <property type="term" value="F:ribonuclease III activity"/>
    <property type="evidence" value="ECO:0007669"/>
    <property type="project" value="InterPro"/>
</dbReference>
<dbReference type="GO" id="GO:0003723">
    <property type="term" value="F:RNA binding"/>
    <property type="evidence" value="ECO:0007669"/>
    <property type="project" value="UniProtKB-KW"/>
</dbReference>
<dbReference type="GO" id="GO:0006995">
    <property type="term" value="P:cellular response to nitrogen starvation"/>
    <property type="evidence" value="ECO:0000304"/>
    <property type="project" value="FlyBase"/>
</dbReference>
<dbReference type="GO" id="GO:0051607">
    <property type="term" value="P:defense response to virus"/>
    <property type="evidence" value="ECO:0000315"/>
    <property type="project" value="TAIR"/>
</dbReference>
<dbReference type="GO" id="GO:0051214">
    <property type="term" value="P:RNAi-mediated antiviral immunity against RNA virus"/>
    <property type="evidence" value="ECO:0000316"/>
    <property type="project" value="TAIR"/>
</dbReference>
<dbReference type="GO" id="GO:0030422">
    <property type="term" value="P:siRNA processing"/>
    <property type="evidence" value="ECO:0000315"/>
    <property type="project" value="FlyBase"/>
</dbReference>
<dbReference type="GO" id="GO:0070549">
    <property type="term" value="P:siRNA-mediated gene silencing by inhibition of translation"/>
    <property type="evidence" value="ECO:0000315"/>
    <property type="project" value="FlyBase"/>
</dbReference>
<dbReference type="GO" id="GO:0010267">
    <property type="term" value="P:ta-siRNA processing"/>
    <property type="evidence" value="ECO:0000315"/>
    <property type="project" value="TAIR"/>
</dbReference>
<dbReference type="CDD" id="cd18034">
    <property type="entry name" value="DEXHc_dicer"/>
    <property type="match status" value="1"/>
</dbReference>
<dbReference type="CDD" id="cd02844">
    <property type="entry name" value="PAZ_CAF_like"/>
    <property type="match status" value="1"/>
</dbReference>
<dbReference type="CDD" id="cd00593">
    <property type="entry name" value="RIBOc"/>
    <property type="match status" value="2"/>
</dbReference>
<dbReference type="CDD" id="cd18802">
    <property type="entry name" value="SF2_C_dicer"/>
    <property type="match status" value="1"/>
</dbReference>
<dbReference type="FunFam" id="2.170.260.10:FF:000007">
    <property type="entry name" value="Dicer-like 105"/>
    <property type="match status" value="1"/>
</dbReference>
<dbReference type="FunFam" id="1.10.1520.10:FF:000013">
    <property type="entry name" value="Endoribonuclease Dicer homolog 2"/>
    <property type="match status" value="1"/>
</dbReference>
<dbReference type="FunFam" id="1.10.1520.10:FF:000004">
    <property type="entry name" value="Endoribonuclease dicer-like 1"/>
    <property type="match status" value="1"/>
</dbReference>
<dbReference type="FunFam" id="3.30.160.380:FF:000001">
    <property type="entry name" value="Endoribonuclease dicer-like 1"/>
    <property type="match status" value="1"/>
</dbReference>
<dbReference type="FunFam" id="3.40.50.300:FF:000420">
    <property type="entry name" value="Endoribonuclease dicer-like 1"/>
    <property type="match status" value="1"/>
</dbReference>
<dbReference type="FunFam" id="3.40.50.300:FF:000705">
    <property type="entry name" value="Endoribonuclease dicer-like protein"/>
    <property type="match status" value="1"/>
</dbReference>
<dbReference type="Gene3D" id="3.30.160.20">
    <property type="match status" value="1"/>
</dbReference>
<dbReference type="Gene3D" id="3.30.160.380">
    <property type="entry name" value="Dicer dimerisation domain"/>
    <property type="match status" value="1"/>
</dbReference>
<dbReference type="Gene3D" id="3.40.50.300">
    <property type="entry name" value="P-loop containing nucleotide triphosphate hydrolases"/>
    <property type="match status" value="2"/>
</dbReference>
<dbReference type="Gene3D" id="2.170.260.10">
    <property type="entry name" value="paz domain"/>
    <property type="match status" value="1"/>
</dbReference>
<dbReference type="Gene3D" id="1.10.1520.10">
    <property type="entry name" value="Ribonuclease III domain"/>
    <property type="match status" value="2"/>
</dbReference>
<dbReference type="InterPro" id="IPR011545">
    <property type="entry name" value="DEAD/DEAH_box_helicase_dom"/>
</dbReference>
<dbReference type="InterPro" id="IPR038248">
    <property type="entry name" value="Dicer_dimer_sf"/>
</dbReference>
<dbReference type="InterPro" id="IPR005034">
    <property type="entry name" value="Dicer_dimerisation_dom"/>
</dbReference>
<dbReference type="InterPro" id="IPR014720">
    <property type="entry name" value="dsRBD_dom"/>
</dbReference>
<dbReference type="InterPro" id="IPR014001">
    <property type="entry name" value="Helicase_ATP-bd"/>
</dbReference>
<dbReference type="InterPro" id="IPR001650">
    <property type="entry name" value="Helicase_C-like"/>
</dbReference>
<dbReference type="InterPro" id="IPR027417">
    <property type="entry name" value="P-loop_NTPase"/>
</dbReference>
<dbReference type="InterPro" id="IPR003100">
    <property type="entry name" value="PAZ_dom"/>
</dbReference>
<dbReference type="InterPro" id="IPR036085">
    <property type="entry name" value="PAZ_dom_sf"/>
</dbReference>
<dbReference type="InterPro" id="IPR000999">
    <property type="entry name" value="RNase_III_dom"/>
</dbReference>
<dbReference type="InterPro" id="IPR036389">
    <property type="entry name" value="RNase_III_sf"/>
</dbReference>
<dbReference type="PANTHER" id="PTHR14950">
    <property type="entry name" value="DICER-RELATED"/>
    <property type="match status" value="1"/>
</dbReference>
<dbReference type="PANTHER" id="PTHR14950:SF70">
    <property type="entry name" value="ENDORIBONUCLEASE DICER HOMOLOG 2"/>
    <property type="match status" value="1"/>
</dbReference>
<dbReference type="Pfam" id="PF00270">
    <property type="entry name" value="DEAD"/>
    <property type="match status" value="1"/>
</dbReference>
<dbReference type="Pfam" id="PF03368">
    <property type="entry name" value="Dicer_dimer"/>
    <property type="match status" value="1"/>
</dbReference>
<dbReference type="Pfam" id="PF00271">
    <property type="entry name" value="Helicase_C"/>
    <property type="match status" value="1"/>
</dbReference>
<dbReference type="Pfam" id="PF02170">
    <property type="entry name" value="PAZ"/>
    <property type="match status" value="1"/>
</dbReference>
<dbReference type="Pfam" id="PF00636">
    <property type="entry name" value="Ribonuclease_3"/>
    <property type="match status" value="2"/>
</dbReference>
<dbReference type="SMART" id="SM00487">
    <property type="entry name" value="DEXDc"/>
    <property type="match status" value="1"/>
</dbReference>
<dbReference type="SMART" id="SM00358">
    <property type="entry name" value="DSRM"/>
    <property type="match status" value="1"/>
</dbReference>
<dbReference type="SMART" id="SM00490">
    <property type="entry name" value="HELICc"/>
    <property type="match status" value="1"/>
</dbReference>
<dbReference type="SMART" id="SM00949">
    <property type="entry name" value="PAZ"/>
    <property type="match status" value="1"/>
</dbReference>
<dbReference type="SMART" id="SM00535">
    <property type="entry name" value="RIBOc"/>
    <property type="match status" value="2"/>
</dbReference>
<dbReference type="SUPFAM" id="SSF54768">
    <property type="entry name" value="dsRNA-binding domain-like"/>
    <property type="match status" value="1"/>
</dbReference>
<dbReference type="SUPFAM" id="SSF52540">
    <property type="entry name" value="P-loop containing nucleoside triphosphate hydrolases"/>
    <property type="match status" value="1"/>
</dbReference>
<dbReference type="SUPFAM" id="SSF101690">
    <property type="entry name" value="PAZ domain"/>
    <property type="match status" value="1"/>
</dbReference>
<dbReference type="SUPFAM" id="SSF69065">
    <property type="entry name" value="RNase III domain-like"/>
    <property type="match status" value="2"/>
</dbReference>
<dbReference type="PROSITE" id="PS51327">
    <property type="entry name" value="DICER_DSRBF"/>
    <property type="match status" value="1"/>
</dbReference>
<dbReference type="PROSITE" id="PS50137">
    <property type="entry name" value="DS_RBD"/>
    <property type="match status" value="1"/>
</dbReference>
<dbReference type="PROSITE" id="PS51192">
    <property type="entry name" value="HELICASE_ATP_BIND_1"/>
    <property type="match status" value="1"/>
</dbReference>
<dbReference type="PROSITE" id="PS51194">
    <property type="entry name" value="HELICASE_CTER"/>
    <property type="match status" value="1"/>
</dbReference>
<dbReference type="PROSITE" id="PS50821">
    <property type="entry name" value="PAZ"/>
    <property type="match status" value="1"/>
</dbReference>
<dbReference type="PROSITE" id="PS00517">
    <property type="entry name" value="RNASE_3_1"/>
    <property type="match status" value="1"/>
</dbReference>
<dbReference type="PROSITE" id="PS50142">
    <property type="entry name" value="RNASE_3_2"/>
    <property type="match status" value="2"/>
</dbReference>
<evidence type="ECO:0000250" key="1"/>
<evidence type="ECO:0000255" key="2">
    <source>
        <dbReference type="PROSITE-ProRule" id="PRU00142"/>
    </source>
</evidence>
<evidence type="ECO:0000255" key="3">
    <source>
        <dbReference type="PROSITE-ProRule" id="PRU00177"/>
    </source>
</evidence>
<evidence type="ECO:0000255" key="4">
    <source>
        <dbReference type="PROSITE-ProRule" id="PRU00266"/>
    </source>
</evidence>
<evidence type="ECO:0000255" key="5">
    <source>
        <dbReference type="PROSITE-ProRule" id="PRU00541"/>
    </source>
</evidence>
<evidence type="ECO:0000255" key="6">
    <source>
        <dbReference type="PROSITE-ProRule" id="PRU00542"/>
    </source>
</evidence>
<evidence type="ECO:0000255" key="7">
    <source>
        <dbReference type="PROSITE-ProRule" id="PRU00657"/>
    </source>
</evidence>
<evidence type="ECO:0000269" key="8">
    <source>
    </source>
</evidence>
<evidence type="ECO:0000269" key="9">
    <source>
    </source>
</evidence>
<evidence type="ECO:0000269" key="10">
    <source>
    </source>
</evidence>
<evidence type="ECO:0000269" key="11">
    <source>
    </source>
</evidence>
<evidence type="ECO:0000269" key="12">
    <source>
    </source>
</evidence>
<evidence type="ECO:0000269" key="13">
    <source>
    </source>
</evidence>
<evidence type="ECO:0000269" key="14">
    <source>
    </source>
</evidence>
<evidence type="ECO:0000303" key="15">
    <source>
    </source>
</evidence>
<evidence type="ECO:0000305" key="16"/>
<protein>
    <recommendedName>
        <fullName>Endoribonuclease Dicer homolog 2</fullName>
        <ecNumber>3.1.26.-</ecNumber>
    </recommendedName>
    <alternativeName>
        <fullName>Dicer-like protein 2</fullName>
        <shortName>AtDCL2</shortName>
    </alternativeName>
</protein>
<feature type="chain" id="PRO_0000404660" description="Endoribonuclease Dicer homolog 2">
    <location>
        <begin position="1"/>
        <end position="1388"/>
    </location>
</feature>
<feature type="domain" description="Helicase ATP-binding" evidence="5">
    <location>
        <begin position="31"/>
        <end position="210"/>
    </location>
</feature>
<feature type="domain" description="Helicase C-terminal" evidence="6">
    <location>
        <begin position="380"/>
        <end position="544"/>
    </location>
</feature>
<feature type="domain" description="Dicer dsRNA-binding fold" evidence="7">
    <location>
        <begin position="559"/>
        <end position="645"/>
    </location>
</feature>
<feature type="domain" description="PAZ" evidence="2">
    <location>
        <begin position="805"/>
        <end position="935"/>
    </location>
</feature>
<feature type="domain" description="RNase III 1" evidence="3">
    <location>
        <begin position="962"/>
        <end position="1113"/>
    </location>
</feature>
<feature type="domain" description="RNase III 2" evidence="3">
    <location>
        <begin position="1149"/>
        <end position="1296"/>
    </location>
</feature>
<feature type="domain" description="DRBM" evidence="4">
    <location>
        <begin position="1315"/>
        <end position="1384"/>
    </location>
</feature>
<feature type="short sequence motif" description="DECH box">
    <location>
        <begin position="152"/>
        <end position="155"/>
    </location>
</feature>
<feature type="binding site" evidence="5">
    <location>
        <begin position="44"/>
        <end position="51"/>
    </location>
    <ligand>
        <name>ATP</name>
        <dbReference type="ChEBI" id="CHEBI:30616"/>
    </ligand>
</feature>
<feature type="binding site" evidence="1">
    <location>
        <position position="1188"/>
    </location>
    <ligand>
        <name>Mg(2+)</name>
        <dbReference type="ChEBI" id="CHEBI:18420"/>
    </ligand>
</feature>
<feature type="binding site" evidence="1">
    <location>
        <position position="1282"/>
    </location>
    <ligand>
        <name>Mg(2+)</name>
        <dbReference type="ChEBI" id="CHEBI:18420"/>
    </ligand>
</feature>
<feature type="binding site" evidence="1">
    <location>
        <position position="1285"/>
    </location>
    <ligand>
        <name>Mg(2+)</name>
        <dbReference type="ChEBI" id="CHEBI:18420"/>
    </ligand>
</feature>
<feature type="site" description="Important for activity" evidence="1">
    <location>
        <position position="1278"/>
    </location>
</feature>
<feature type="splice variant" id="VSP_040615" description="In isoform 2." evidence="15">
    <original>MTMDADAMETETTDQVSASPLHFARSYQVEALEKAIKQNTIVFLETGSGKTLIAIMLLRSYAYLFRKPSPCFCVFLVPQVVLV</original>
    <variation>MLLCLLGSSSGSCHSGIGVRIGVVDKGIHQYTDLSFVLQFLHYYTCSFSKFRNFSVTFSIISAFFLVCF</variation>
    <location>
        <begin position="1"/>
        <end position="83"/>
    </location>
</feature>
<feature type="sequence conflict" description="In Ref. 1; ABF19797/ABF19798." evidence="16" ref="1">
    <original>L</original>
    <variation>S</variation>
    <location>
        <position position="511"/>
    </location>
</feature>
<feature type="sequence conflict" description="In Ref. 1; ABF19797/ABF19798." evidence="16" ref="1">
    <original>F</original>
    <variation>L</variation>
    <location>
        <position position="693"/>
    </location>
</feature>
<feature type="sequence conflict" description="In Ref. 1; ABF19797/ABF19798." evidence="16" ref="1">
    <original>Q</original>
    <variation>R</variation>
    <location>
        <position position="738"/>
    </location>
</feature>
<feature type="sequence conflict" description="In Ref. 1; ABF19797/ABF19798." evidence="16" ref="1">
    <original>F</original>
    <variation>L</variation>
    <location>
        <position position="1130"/>
    </location>
</feature>
<sequence length="1388" mass="156865">MTMDADAMETETTDQVSASPLHFARSYQVEALEKAIKQNTIVFLETGSGKTLIAIMLLRSYAYLFRKPSPCFCVFLVPQVVLVTQQAEALKMHTDLKVGMYWGDMGVDFWDSSTWKQEVDKYEVLVMTPAILLDALRHSFLSLSMIKVLIVDECHHAGGKHPYACIMREFYHKELNSGTSNVPRIFGMTASLVKTKGENLDSYWKKIHELETLMNSKVYTCENESVLAGFVPFSTPSFKYYQHIKIPSPKRASLVEKLERLTIKHRLSLGTLDLNSSTVDSVEKRLLRISSTLTYCLDDLGILLAQKAAQSLSASQNDSFLWGELNMFSVALVKKFCSDASQEFLAEIPQGLNWSVANINGNAEAGLLTLKTVCLIETLLGYSSLENIRCIIFVDRVITAIVLESLLAEILPNCNNWKTKYVAGNNSGLQNQTRKKQNEIVEDFRRGLVNIIVATSILEEGLDVQSCNLVIRFDPASNICSFIQSRGRARMQNSDYLMMVESGDLLTQSRLMKYLSGGKRMREESLDHSLVPCPPLPDDSDEPLFRVESTGATVTLSSSVSLIYHYCSRLPSDEYFKPAPRFDVNKDQGSCTLYLPKSCPVKEVKAEANNKVLKQAVCLKACIQLHKVGALSDHLVPDMVVAETVSQKLEKIQYNTEQPCYFPPELVSQFSAQPETTYHFYLIRMKPNSPRNFHLNDVLLGTRVVLEDDIGNTSFRLEDHRGTIAVTLSYVGAFHLTQEEVLFCRRFQITLFRVLLDHSVENLMEALNGLHLRDGVALDYLLVPSTHSHETSLIDWEVIRSVNLTSHEVLEKHENCSTNGASRILHTKDGLFCTCVVQNALVYTPHNGYVYCTKGVLNNLNGNSLLTKRNSGDQTYIEYYEERHGIQLNFVDEPLLNGRHIFTLHSYLHMAKKKKEKEHDREFVELPPELCHVILSPISVDMIYSYTFIPSVMQRIESLLIAYNLKKSIPKVNIPTIKVLEAITTKKCEDQFHLESLETLGDSFLKYAVCQQLFQHCHTHHEGLLSTKKDGMISNVMLCQFGCQQKLQGFIRDECFEPKGWMVPGQSSAAYSLVNDTLPESRNIYVASRRNLKRKSVADVVESLIGAYLSEGGELAALMFMNWVGIKVDFTTTKIQRDSPIQAEKLVNVGYMESLLNYSFEDKSLLVEALTHGSYMMPEIPRCYQRLEFLGDSVLDYLITKHLYDKYPCLSPGLLTDMRSASVNNECYALVAVKANLHKHILYASHHLHKHISRTVSEFEQSSLQSTFGWESDISFPKVLGDVIESLAGAIFVDSGYNKEVVFASIKPLLGCMITPETVKLHPVRELTELCQKWQFELSKAKDFDSFTVEVKAKEMSFAHTAKASDKKMAKKLAYKEVLNLLKNSLDY</sequence>
<organism>
    <name type="scientific">Arabidopsis thaliana</name>
    <name type="common">Mouse-ear cress</name>
    <dbReference type="NCBI Taxonomy" id="3702"/>
    <lineage>
        <taxon>Eukaryota</taxon>
        <taxon>Viridiplantae</taxon>
        <taxon>Streptophyta</taxon>
        <taxon>Embryophyta</taxon>
        <taxon>Tracheophyta</taxon>
        <taxon>Spermatophyta</taxon>
        <taxon>Magnoliopsida</taxon>
        <taxon>eudicotyledons</taxon>
        <taxon>Gunneridae</taxon>
        <taxon>Pentapetalae</taxon>
        <taxon>rosids</taxon>
        <taxon>malvids</taxon>
        <taxon>Brassicales</taxon>
        <taxon>Brassicaceae</taxon>
        <taxon>Camelineae</taxon>
        <taxon>Arabidopsis</taxon>
    </lineage>
</organism>
<gene>
    <name type="ordered locus">At3g03300</name>
    <name type="ORF">T17B22.1</name>
</gene>
<comment type="function">
    <text evidence="9 10 11 12 13 14">Ribonuclease (RNase) III involved in RNA-mediated post-transcriptional gene silencing (PTGS). Involved in the processing of natural small interfering RNAs (nat-siRNAs, derived from cis-natural antisense transcripts) by cleaving small dsRNAs into 24 nucleotide nat-siRNAs. Plays an essential role in transitive silencing of transgenes by processing secondary siRNAs. This pathway, which requires DCL4 and RDR6, amplifies silencing by using the target RNA as substrate to generate secondary siRNAs, providing an efficient mechanism for long-distance silencing. May participate with DCL3 in the production of 24 nucleotide repeat-associated siRNAs (ra-siRNAs) which derive from heterochromatin and DNA repeats such as transposons. Plays a role in antiviral RNA silencing. Involved in the production of viral siRNAs derived from the turnip crinkle virus (TCV) and tobacco rattle virus (TRV). Targeted by the viral silencing suppressor (VSR) protein 2b of the cucumber mosaic virus (CMV) that inactivates DCL2 function in RNA silencing. Does not seem to be involved in microRNAs (miRNAs) processing.</text>
</comment>
<comment type="cofactor">
    <cofactor evidence="1">
        <name>Mg(2+)</name>
        <dbReference type="ChEBI" id="CHEBI:18420"/>
    </cofactor>
    <cofactor evidence="1">
        <name>Mn(2+)</name>
        <dbReference type="ChEBI" id="CHEBI:29035"/>
    </cofactor>
</comment>
<comment type="interaction">
    <interactant intactId="EBI-2464030">
        <id>Q3EBC8</id>
    </interactant>
    <interactant intactId="EBI-632620">
        <id>O04492</id>
        <label>DRB1</label>
    </interactant>
    <organismsDiffer>false</organismsDiffer>
    <experiments>2</experiments>
</comment>
<comment type="subcellular location">
    <subcellularLocation>
        <location evidence="8">Nucleus</location>
    </subcellularLocation>
    <subcellularLocation>
        <location evidence="8">Cytoplasm</location>
    </subcellularLocation>
</comment>
<comment type="alternative products">
    <event type="alternative splicing"/>
    <isoform>
        <id>Q3EBC8-1</id>
        <name>1</name>
        <sequence type="displayed"/>
    </isoform>
    <isoform>
        <id>Q3EBC8-2</id>
        <name>2</name>
        <sequence type="described" ref="VSP_040615"/>
    </isoform>
</comment>
<comment type="similarity">
    <text evidence="7">Belongs to the helicase family. Dicer subfamily.</text>
</comment>
<comment type="sequence caution" evidence="16">
    <conflict type="erroneous gene model prediction">
        <sequence resource="EMBL-CDS" id="AAF26098"/>
    </conflict>
    <text>The predicted gene At3g03300 has been split into 2 genes: At3g03300 and At3g03305.</text>
</comment>
<comment type="sequence caution" evidence="16">
    <conflict type="erroneous initiation">
        <sequence resource="EMBL-CDS" id="ABF19797"/>
    </conflict>
    <text>Truncated N-terminus.</text>
</comment>
<keyword id="KW-0025">Alternative splicing</keyword>
<keyword id="KW-0067">ATP-binding</keyword>
<keyword id="KW-0963">Cytoplasm</keyword>
<keyword id="KW-0255">Endonuclease</keyword>
<keyword id="KW-0347">Helicase</keyword>
<keyword id="KW-0378">Hydrolase</keyword>
<keyword id="KW-0460">Magnesium</keyword>
<keyword id="KW-0464">Manganese</keyword>
<keyword id="KW-0479">Metal-binding</keyword>
<keyword id="KW-0540">Nuclease</keyword>
<keyword id="KW-0547">Nucleotide-binding</keyword>
<keyword id="KW-0539">Nucleus</keyword>
<keyword id="KW-0611">Plant defense</keyword>
<keyword id="KW-1185">Reference proteome</keyword>
<keyword id="KW-0677">Repeat</keyword>
<keyword id="KW-0694">RNA-binding</keyword>
<keyword id="KW-0943">RNA-mediated gene silencing</keyword>
<accession>Q3EBC8</accession>
<accession>Q1KL57</accession>
<accession>Q1KL58</accession>
<accession>Q9M9P8</accession>
<name>DCL2_ARATH</name>